<feature type="signal peptide" evidence="2">
    <location>
        <begin position="1"/>
        <end position="19"/>
    </location>
</feature>
<feature type="chain" id="PRO_5007392529" description="Immunoglobulin heavy variable 3-66" evidence="2">
    <location>
        <begin position="20"/>
        <end position="116"/>
    </location>
</feature>
<feature type="domain" description="Ig-like" evidence="3">
    <location>
        <begin position="20"/>
        <end position="116" status="greater than"/>
    </location>
</feature>
<feature type="region of interest" description="Framework-1" evidence="1">
    <location>
        <begin position="20"/>
        <end position="44"/>
    </location>
</feature>
<feature type="region of interest" description="Complementarity-determining-1" evidence="1">
    <location>
        <begin position="45"/>
        <end position="52"/>
    </location>
</feature>
<feature type="region of interest" description="Framework-2" evidence="1">
    <location>
        <begin position="53"/>
        <end position="69"/>
    </location>
</feature>
<feature type="region of interest" description="Complementarity-determining-2" evidence="1">
    <location>
        <begin position="70"/>
        <end position="76"/>
    </location>
</feature>
<feature type="region of interest" description="Framework-3" evidence="1">
    <location>
        <begin position="77"/>
        <end position="114"/>
    </location>
</feature>
<feature type="region of interest" description="Complementarity-determining-3" evidence="1">
    <location>
        <begin position="115"/>
        <end position="116" status="greater than"/>
    </location>
</feature>
<feature type="disulfide bond" evidence="3">
    <location>
        <begin position="41"/>
        <end position="114"/>
    </location>
</feature>
<feature type="non-terminal residue">
    <location>
        <position position="116"/>
    </location>
</feature>
<dbReference type="EMBL" id="AC245369">
    <property type="status" value="NOT_ANNOTATED_CDS"/>
    <property type="molecule type" value="Genomic_DNA"/>
</dbReference>
<dbReference type="EMDB" id="EMD-36371"/>
<dbReference type="SMR" id="A0A0C4DH42"/>
<dbReference type="FunCoup" id="A0A0C4DH42">
    <property type="interactions" value="328"/>
</dbReference>
<dbReference type="IMGT_GENE-DB" id="IGHV3-66"/>
<dbReference type="BioMuta" id="IGHV3-66"/>
<dbReference type="jPOST" id="A0A0C4DH42"/>
<dbReference type="MassIVE" id="A0A0C4DH42"/>
<dbReference type="PRIDE" id="A0A0C4DH42"/>
<dbReference type="Pumba" id="A0A0C4DH42"/>
<dbReference type="Ensembl" id="ENST00000390632.2">
    <property type="protein sequence ID" value="ENSP00000375041.2"/>
    <property type="gene ID" value="ENSG00000211972.2"/>
</dbReference>
<dbReference type="Ensembl" id="ENST00000632846.1">
    <property type="protein sequence ID" value="ENSP00000487902.1"/>
    <property type="gene ID" value="ENSG00000282045.1"/>
</dbReference>
<dbReference type="AGR" id="HGNC:5619"/>
<dbReference type="GeneCards" id="IGHV3-66"/>
<dbReference type="HGNC" id="HGNC:5619">
    <property type="gene designation" value="IGHV3-66"/>
</dbReference>
<dbReference type="HPA" id="ENSG00000211972">
    <property type="expression patterns" value="Tissue enhanced (gallbladder, intestine, urinary bladder)"/>
</dbReference>
<dbReference type="neXtProt" id="NX_A0A0C4DH42"/>
<dbReference type="OpenTargets" id="ENSG00000211972"/>
<dbReference type="VEuPathDB" id="HostDB:ENSG00000211972"/>
<dbReference type="GeneTree" id="ENSGT01050000244871"/>
<dbReference type="HOGENOM" id="CLU_077975_5_2_1"/>
<dbReference type="InParanoid" id="A0A0C4DH42"/>
<dbReference type="OMA" id="NYGMNWI"/>
<dbReference type="OrthoDB" id="9945861at2759"/>
<dbReference type="PAN-GO" id="A0A0C4DH42">
    <property type="GO annotations" value="11 GO annotations based on evolutionary models"/>
</dbReference>
<dbReference type="PhylomeDB" id="A0A0C4DH42"/>
<dbReference type="SignaLink" id="A0A0C4DH42"/>
<dbReference type="Pharos" id="A0A0C4DH42">
    <property type="development level" value="Tdark"/>
</dbReference>
<dbReference type="PRO" id="PR:A0A0C4DH42"/>
<dbReference type="Proteomes" id="UP000005640">
    <property type="component" value="Chromosome 14"/>
</dbReference>
<dbReference type="RNAct" id="A0A0C4DH42">
    <property type="molecule type" value="protein"/>
</dbReference>
<dbReference type="Bgee" id="ENSG00000211972">
    <property type="expression patterns" value="Expressed in rectum and 89 other cell types or tissues"/>
</dbReference>
<dbReference type="GO" id="GO:0005576">
    <property type="term" value="C:extracellular region"/>
    <property type="evidence" value="ECO:0007669"/>
    <property type="project" value="UniProtKB-SubCell"/>
</dbReference>
<dbReference type="GO" id="GO:0019814">
    <property type="term" value="C:immunoglobulin complex"/>
    <property type="evidence" value="ECO:0007669"/>
    <property type="project" value="UniProtKB-KW"/>
</dbReference>
<dbReference type="GO" id="GO:0005886">
    <property type="term" value="C:plasma membrane"/>
    <property type="evidence" value="ECO:0007669"/>
    <property type="project" value="UniProtKB-SubCell"/>
</dbReference>
<dbReference type="GO" id="GO:0003823">
    <property type="term" value="F:antigen binding"/>
    <property type="evidence" value="ECO:0000318"/>
    <property type="project" value="GO_Central"/>
</dbReference>
<dbReference type="GO" id="GO:0016064">
    <property type="term" value="P:immunoglobulin mediated immune response"/>
    <property type="evidence" value="ECO:0000318"/>
    <property type="project" value="GO_Central"/>
</dbReference>
<dbReference type="CDD" id="cd04981">
    <property type="entry name" value="IgV_H"/>
    <property type="match status" value="1"/>
</dbReference>
<dbReference type="FunFam" id="2.60.40.10:FF:000942">
    <property type="entry name" value="Immunoglobulin heavy variable 3-23"/>
    <property type="match status" value="1"/>
</dbReference>
<dbReference type="Gene3D" id="2.60.40.10">
    <property type="entry name" value="Immunoglobulins"/>
    <property type="match status" value="1"/>
</dbReference>
<dbReference type="InterPro" id="IPR007110">
    <property type="entry name" value="Ig-like_dom"/>
</dbReference>
<dbReference type="InterPro" id="IPR036179">
    <property type="entry name" value="Ig-like_dom_sf"/>
</dbReference>
<dbReference type="InterPro" id="IPR013783">
    <property type="entry name" value="Ig-like_fold"/>
</dbReference>
<dbReference type="InterPro" id="IPR013106">
    <property type="entry name" value="Ig_V-set"/>
</dbReference>
<dbReference type="InterPro" id="IPR050199">
    <property type="entry name" value="IgHV"/>
</dbReference>
<dbReference type="PANTHER" id="PTHR23266">
    <property type="entry name" value="IMMUNOGLOBULIN HEAVY CHAIN"/>
    <property type="match status" value="1"/>
</dbReference>
<dbReference type="Pfam" id="PF07686">
    <property type="entry name" value="V-set"/>
    <property type="match status" value="1"/>
</dbReference>
<dbReference type="SMART" id="SM00406">
    <property type="entry name" value="IGv"/>
    <property type="match status" value="1"/>
</dbReference>
<dbReference type="SUPFAM" id="SSF48726">
    <property type="entry name" value="Immunoglobulin"/>
    <property type="match status" value="1"/>
</dbReference>
<dbReference type="PROSITE" id="PS50835">
    <property type="entry name" value="IG_LIKE"/>
    <property type="match status" value="1"/>
</dbReference>
<gene>
    <name evidence="4 9" type="primary">IGHV3-66</name>
</gene>
<evidence type="ECO:0000250" key="1">
    <source>
        <dbReference type="UniProtKB" id="P23083"/>
    </source>
</evidence>
<evidence type="ECO:0000255" key="2"/>
<evidence type="ECO:0000255" key="3">
    <source>
        <dbReference type="PROSITE-ProRule" id="PRU00114"/>
    </source>
</evidence>
<evidence type="ECO:0000303" key="4">
    <source>
    </source>
</evidence>
<evidence type="ECO:0000303" key="5">
    <source>
    </source>
</evidence>
<evidence type="ECO:0000303" key="6">
    <source>
    </source>
</evidence>
<evidence type="ECO:0000303" key="7">
    <source>
    </source>
</evidence>
<evidence type="ECO:0000303" key="8">
    <source>
    </source>
</evidence>
<evidence type="ECO:0000303" key="9">
    <source ref="3"/>
</evidence>
<evidence type="ECO:0000305" key="10"/>
<sequence length="116" mass="12698">MEFGLSWVFLVAILKGVQCEVQLVESGGGLIQPGGSLRLSCAASGFTVSSNYMSWVRQAPGKGLEWVSVIYSCGSTYYADSVKGRFTISRDNSKNTLYLQMNSLRAEDTAVYYCAR</sequence>
<organism>
    <name type="scientific">Homo sapiens</name>
    <name type="common">Human</name>
    <dbReference type="NCBI Taxonomy" id="9606"/>
    <lineage>
        <taxon>Eukaryota</taxon>
        <taxon>Metazoa</taxon>
        <taxon>Chordata</taxon>
        <taxon>Craniata</taxon>
        <taxon>Vertebrata</taxon>
        <taxon>Euteleostomi</taxon>
        <taxon>Mammalia</taxon>
        <taxon>Eutheria</taxon>
        <taxon>Euarchontoglires</taxon>
        <taxon>Primates</taxon>
        <taxon>Haplorrhini</taxon>
        <taxon>Catarrhini</taxon>
        <taxon>Hominidae</taxon>
        <taxon>Homo</taxon>
    </lineage>
</organism>
<protein>
    <recommendedName>
        <fullName evidence="4 9">Immunoglobulin heavy variable 3-66</fullName>
    </recommendedName>
</protein>
<proteinExistence type="evidence at protein level"/>
<name>HV366_HUMAN</name>
<reference key="1">
    <citation type="journal article" date="2003" name="Nature">
        <title>The DNA sequence and analysis of human chromosome 14.</title>
        <authorList>
            <person name="Heilig R."/>
            <person name="Eckenberg R."/>
            <person name="Petit J.-L."/>
            <person name="Fonknechten N."/>
            <person name="Da Silva C."/>
            <person name="Cattolico L."/>
            <person name="Levy M."/>
            <person name="Barbe V."/>
            <person name="De Berardinis V."/>
            <person name="Ureta-Vidal A."/>
            <person name="Pelletier E."/>
            <person name="Vico V."/>
            <person name="Anthouard V."/>
            <person name="Rowen L."/>
            <person name="Madan A."/>
            <person name="Qin S."/>
            <person name="Sun H."/>
            <person name="Du H."/>
            <person name="Pepin K."/>
            <person name="Artiguenave F."/>
            <person name="Robert C."/>
            <person name="Cruaud C."/>
            <person name="Bruels T."/>
            <person name="Jaillon O."/>
            <person name="Friedlander L."/>
            <person name="Samson G."/>
            <person name="Brottier P."/>
            <person name="Cure S."/>
            <person name="Segurens B."/>
            <person name="Aniere F."/>
            <person name="Samain S."/>
            <person name="Crespeau H."/>
            <person name="Abbasi N."/>
            <person name="Aiach N."/>
            <person name="Boscus D."/>
            <person name="Dickhoff R."/>
            <person name="Dors M."/>
            <person name="Dubois I."/>
            <person name="Friedman C."/>
            <person name="Gouyvenoux M."/>
            <person name="James R."/>
            <person name="Madan A."/>
            <person name="Mairey-Estrada B."/>
            <person name="Mangenot S."/>
            <person name="Martins N."/>
            <person name="Menard M."/>
            <person name="Oztas S."/>
            <person name="Ratcliffe A."/>
            <person name="Shaffer T."/>
            <person name="Trask B."/>
            <person name="Vacherie B."/>
            <person name="Bellemere C."/>
            <person name="Belser C."/>
            <person name="Besnard-Gonnet M."/>
            <person name="Bartol-Mavel D."/>
            <person name="Boutard M."/>
            <person name="Briez-Silla S."/>
            <person name="Combette S."/>
            <person name="Dufosse-Laurent V."/>
            <person name="Ferron C."/>
            <person name="Lechaplais C."/>
            <person name="Louesse C."/>
            <person name="Muselet D."/>
            <person name="Magdelenat G."/>
            <person name="Pateau E."/>
            <person name="Petit E."/>
            <person name="Sirvain-Trukniewicz P."/>
            <person name="Trybou A."/>
            <person name="Vega-Czarny N."/>
            <person name="Bataille E."/>
            <person name="Bluet E."/>
            <person name="Bordelais I."/>
            <person name="Dubois M."/>
            <person name="Dumont C."/>
            <person name="Guerin T."/>
            <person name="Haffray S."/>
            <person name="Hammadi R."/>
            <person name="Muanga J."/>
            <person name="Pellouin V."/>
            <person name="Robert D."/>
            <person name="Wunderle E."/>
            <person name="Gauguet G."/>
            <person name="Roy A."/>
            <person name="Sainte-Marthe L."/>
            <person name="Verdier J."/>
            <person name="Verdier-Discala C."/>
            <person name="Hillier L.W."/>
            <person name="Fulton L."/>
            <person name="McPherson J."/>
            <person name="Matsuda F."/>
            <person name="Wilson R."/>
            <person name="Scarpelli C."/>
            <person name="Gyapay G."/>
            <person name="Wincker P."/>
            <person name="Saurin W."/>
            <person name="Quetier F."/>
            <person name="Waterston R."/>
            <person name="Hood L."/>
            <person name="Weissenbach J."/>
        </authorList>
    </citation>
    <scope>NUCLEOTIDE SEQUENCE [LARGE SCALE GENOMIC DNA] (IMGT ALLELE IGHV3-66*03)</scope>
</reference>
<reference key="2">
    <citation type="journal article" date="2001" name="Exp. Clin. Immunogenet.">
        <title>Nomenclature of the human immunoglobulin heavy (IGH) genes.</title>
        <authorList>
            <person name="Lefranc M.P."/>
        </authorList>
    </citation>
    <scope>NOMENCLATURE</scope>
</reference>
<reference key="3">
    <citation type="book" date="2001" name="The Immunoglobulin FactsBook.">
        <title>The Immunoglobulin FactsBook.</title>
        <editorList>
            <person name="Lefranc M.P."/>
            <person name="Lefranc G."/>
        </editorList>
        <authorList>
            <person name="Lefranc M.P."/>
            <person name="Lefranc G."/>
        </authorList>
    </citation>
    <scope>NOMENCLATURE</scope>
</reference>
<reference key="4">
    <citation type="journal article" date="2007" name="Annu. Rev. Genet.">
        <title>Immunoglobulin somatic hypermutation.</title>
        <authorList>
            <person name="Teng G."/>
            <person name="Papavasiliou F.N."/>
        </authorList>
    </citation>
    <scope>REVIEW ON SOMATIC HYPERMUTATION</scope>
</reference>
<reference key="5">
    <citation type="journal article" date="2010" name="J. Allergy Clin. Immunol.">
        <title>Structure and function of immunoglobulins.</title>
        <authorList>
            <person name="Schroeder H.W. Jr."/>
            <person name="Cavacini L."/>
        </authorList>
    </citation>
    <scope>REVIEW ON IMMUNOGLOBULINS</scope>
</reference>
<reference key="6">
    <citation type="journal article" date="2012" name="Nat. Rev. Immunol.">
        <title>Molecular programming of B cell memory.</title>
        <authorList>
            <person name="McHeyzer-Williams M."/>
            <person name="Okitsu S."/>
            <person name="Wang N."/>
            <person name="McHeyzer-Williams L."/>
        </authorList>
    </citation>
    <scope>REVIEW ON FUNCTION</scope>
</reference>
<reference key="7">
    <citation type="journal article" date="2014" name="Front. Immunol.">
        <title>Immunoglobulin and T Cell Receptor Genes: IMGT((R)) and the Birth and Rise of Immunoinformatics.</title>
        <authorList>
            <person name="Lefranc M.P."/>
        </authorList>
    </citation>
    <scope>NOMENCLATURE</scope>
</reference>
<keyword id="KW-1064">Adaptive immunity</keyword>
<keyword id="KW-1003">Cell membrane</keyword>
<keyword id="KW-1015">Disulfide bond</keyword>
<keyword id="KW-0391">Immunity</keyword>
<keyword id="KW-1280">Immunoglobulin</keyword>
<keyword id="KW-0393">Immunoglobulin domain</keyword>
<keyword id="KW-0472">Membrane</keyword>
<keyword id="KW-1267">Proteomics identification</keyword>
<keyword id="KW-1185">Reference proteome</keyword>
<keyword id="KW-0964">Secreted</keyword>
<keyword id="KW-0732">Signal</keyword>
<accession>A0A0C4DH42</accession>
<comment type="function">
    <text evidence="5 6 7 8">V region of the variable domain of immunoglobulin heavy chains that participates in the antigen recognition (PubMed:24600447). Immunoglobulins, also known as antibodies, are membrane-bound or secreted glycoproteins produced by B lymphocytes. In the recognition phase of humoral immunity, the membrane-bound immunoglobulins serve as receptors which, upon binding of a specific antigen, trigger the clonal expansion and differentiation of B lymphocytes into immunoglobulins-secreting plasma cells. Secreted immunoglobulins mediate the effector phase of humoral immunity, which results in the elimination of bound antigens (PubMed:20176268, PubMed:22158414). The antigen binding site is formed by the variable domain of one heavy chain, together with that of its associated light chain. Thus, each immunoglobulin has two antigen binding sites with remarkable affinity for a particular antigen. The variable domains are assembled by a process called V-(D)-J rearrangement and can then be subjected to somatic hypermutations which, after exposure to antigen and selection, allow affinity maturation for a particular antigen (PubMed:17576170, PubMed:20176268).</text>
</comment>
<comment type="subunit">
    <text evidence="6">Immunoglobulins are composed of two identical heavy chains and two identical light chains; disulfide-linked.</text>
</comment>
<comment type="subcellular location">
    <subcellularLocation>
        <location evidence="6 7">Secreted</location>
    </subcellularLocation>
    <subcellularLocation>
        <location evidence="6 7">Cell membrane</location>
    </subcellularLocation>
</comment>
<comment type="polymorphism">
    <text evidence="10">There are several alleles. The sequence shown is that of IMGT allele IGHV3-66*03.</text>
</comment>
<comment type="caution">
    <text evidence="10">For examples of full-length immunoglobulin heavy chains (of different isotypes) see AC P0DOX2, AC P0DOX3, AC P0DOX4, AC P0DOX5 and AC P0DOX6.</text>
</comment>